<name>RUVA_RHILW</name>
<organism>
    <name type="scientific">Rhizobium leguminosarum bv. trifolii (strain WSM2304)</name>
    <dbReference type="NCBI Taxonomy" id="395492"/>
    <lineage>
        <taxon>Bacteria</taxon>
        <taxon>Pseudomonadati</taxon>
        <taxon>Pseudomonadota</taxon>
        <taxon>Alphaproteobacteria</taxon>
        <taxon>Hyphomicrobiales</taxon>
        <taxon>Rhizobiaceae</taxon>
        <taxon>Rhizobium/Agrobacterium group</taxon>
        <taxon>Rhizobium</taxon>
    </lineage>
</organism>
<dbReference type="EMBL" id="CP001191">
    <property type="protein sequence ID" value="ACI56487.1"/>
    <property type="molecule type" value="Genomic_DNA"/>
</dbReference>
<dbReference type="RefSeq" id="WP_012558851.1">
    <property type="nucleotide sequence ID" value="NC_011369.1"/>
</dbReference>
<dbReference type="SMR" id="B5ZP79"/>
<dbReference type="STRING" id="395492.Rleg2_3220"/>
<dbReference type="KEGG" id="rlt:Rleg2_3220"/>
<dbReference type="eggNOG" id="COG0632">
    <property type="taxonomic scope" value="Bacteria"/>
</dbReference>
<dbReference type="HOGENOM" id="CLU_087936_3_0_5"/>
<dbReference type="Proteomes" id="UP000008330">
    <property type="component" value="Chromosome"/>
</dbReference>
<dbReference type="GO" id="GO:0005737">
    <property type="term" value="C:cytoplasm"/>
    <property type="evidence" value="ECO:0007669"/>
    <property type="project" value="UniProtKB-SubCell"/>
</dbReference>
<dbReference type="GO" id="GO:0009379">
    <property type="term" value="C:Holliday junction helicase complex"/>
    <property type="evidence" value="ECO:0007669"/>
    <property type="project" value="InterPro"/>
</dbReference>
<dbReference type="GO" id="GO:0048476">
    <property type="term" value="C:Holliday junction resolvase complex"/>
    <property type="evidence" value="ECO:0007669"/>
    <property type="project" value="UniProtKB-UniRule"/>
</dbReference>
<dbReference type="GO" id="GO:0005524">
    <property type="term" value="F:ATP binding"/>
    <property type="evidence" value="ECO:0007669"/>
    <property type="project" value="InterPro"/>
</dbReference>
<dbReference type="GO" id="GO:0000400">
    <property type="term" value="F:four-way junction DNA binding"/>
    <property type="evidence" value="ECO:0007669"/>
    <property type="project" value="UniProtKB-UniRule"/>
</dbReference>
<dbReference type="GO" id="GO:0009378">
    <property type="term" value="F:four-way junction helicase activity"/>
    <property type="evidence" value="ECO:0007669"/>
    <property type="project" value="InterPro"/>
</dbReference>
<dbReference type="GO" id="GO:0006310">
    <property type="term" value="P:DNA recombination"/>
    <property type="evidence" value="ECO:0007669"/>
    <property type="project" value="UniProtKB-UniRule"/>
</dbReference>
<dbReference type="GO" id="GO:0006281">
    <property type="term" value="P:DNA repair"/>
    <property type="evidence" value="ECO:0007669"/>
    <property type="project" value="UniProtKB-UniRule"/>
</dbReference>
<dbReference type="Gene3D" id="1.10.150.20">
    <property type="entry name" value="5' to 3' exonuclease, C-terminal subdomain"/>
    <property type="match status" value="1"/>
</dbReference>
<dbReference type="Gene3D" id="1.10.8.10">
    <property type="entry name" value="DNA helicase RuvA subunit, C-terminal domain"/>
    <property type="match status" value="1"/>
</dbReference>
<dbReference type="Gene3D" id="2.40.50.140">
    <property type="entry name" value="Nucleic acid-binding proteins"/>
    <property type="match status" value="1"/>
</dbReference>
<dbReference type="HAMAP" id="MF_00031">
    <property type="entry name" value="DNA_HJ_migration_RuvA"/>
    <property type="match status" value="1"/>
</dbReference>
<dbReference type="InterPro" id="IPR013849">
    <property type="entry name" value="DNA_helicase_Holl-junc_RuvA_I"/>
</dbReference>
<dbReference type="InterPro" id="IPR012340">
    <property type="entry name" value="NA-bd_OB-fold"/>
</dbReference>
<dbReference type="InterPro" id="IPR000085">
    <property type="entry name" value="RuvA"/>
</dbReference>
<dbReference type="InterPro" id="IPR010994">
    <property type="entry name" value="RuvA_2-like"/>
</dbReference>
<dbReference type="InterPro" id="IPR011114">
    <property type="entry name" value="RuvA_C"/>
</dbReference>
<dbReference type="InterPro" id="IPR036267">
    <property type="entry name" value="RuvA_C_sf"/>
</dbReference>
<dbReference type="NCBIfam" id="TIGR00084">
    <property type="entry name" value="ruvA"/>
    <property type="match status" value="1"/>
</dbReference>
<dbReference type="Pfam" id="PF14520">
    <property type="entry name" value="HHH_5"/>
    <property type="match status" value="1"/>
</dbReference>
<dbReference type="Pfam" id="PF07499">
    <property type="entry name" value="RuvA_C"/>
    <property type="match status" value="1"/>
</dbReference>
<dbReference type="Pfam" id="PF01330">
    <property type="entry name" value="RuvA_N"/>
    <property type="match status" value="1"/>
</dbReference>
<dbReference type="SUPFAM" id="SSF46929">
    <property type="entry name" value="DNA helicase RuvA subunit, C-terminal domain"/>
    <property type="match status" value="1"/>
</dbReference>
<dbReference type="SUPFAM" id="SSF50249">
    <property type="entry name" value="Nucleic acid-binding proteins"/>
    <property type="match status" value="1"/>
</dbReference>
<dbReference type="SUPFAM" id="SSF47781">
    <property type="entry name" value="RuvA domain 2-like"/>
    <property type="match status" value="1"/>
</dbReference>
<protein>
    <recommendedName>
        <fullName evidence="1">Holliday junction branch migration complex subunit RuvA</fullName>
    </recommendedName>
</protein>
<feature type="chain" id="PRO_1000090358" description="Holliday junction branch migration complex subunit RuvA">
    <location>
        <begin position="1"/>
        <end position="204"/>
    </location>
</feature>
<feature type="region of interest" description="Domain I" evidence="1">
    <location>
        <begin position="1"/>
        <end position="64"/>
    </location>
</feature>
<feature type="region of interest" description="Domain II" evidence="1">
    <location>
        <begin position="65"/>
        <end position="143"/>
    </location>
</feature>
<feature type="region of interest" description="Flexible linker" evidence="1">
    <location>
        <begin position="144"/>
        <end position="151"/>
    </location>
</feature>
<feature type="region of interest" description="Domain III" evidence="1">
    <location>
        <begin position="152"/>
        <end position="204"/>
    </location>
</feature>
<gene>
    <name evidence="1" type="primary">ruvA</name>
    <name type="ordered locus">Rleg2_3220</name>
</gene>
<reference key="1">
    <citation type="journal article" date="2010" name="Stand. Genomic Sci.">
        <title>Complete genome sequence of Rhizobium leguminosarum bv trifolii strain WSM2304, an effective microsymbiont of the South American clover Trifolium polymorphum.</title>
        <authorList>
            <person name="Reeve W."/>
            <person name="O'Hara G."/>
            <person name="Chain P."/>
            <person name="Ardley J."/>
            <person name="Brau L."/>
            <person name="Nandesena K."/>
            <person name="Tiwari R."/>
            <person name="Malfatti S."/>
            <person name="Kiss H."/>
            <person name="Lapidus A."/>
            <person name="Copeland A."/>
            <person name="Nolan M."/>
            <person name="Land M."/>
            <person name="Ivanova N."/>
            <person name="Mavromatis K."/>
            <person name="Markowitz V."/>
            <person name="Kyrpides N."/>
            <person name="Melino V."/>
            <person name="Denton M."/>
            <person name="Yates R."/>
            <person name="Howieson J."/>
        </authorList>
    </citation>
    <scope>NUCLEOTIDE SEQUENCE [LARGE SCALE GENOMIC DNA]</scope>
    <source>
        <strain>WSM2304</strain>
    </source>
</reference>
<keyword id="KW-0963">Cytoplasm</keyword>
<keyword id="KW-0227">DNA damage</keyword>
<keyword id="KW-0233">DNA recombination</keyword>
<keyword id="KW-0234">DNA repair</keyword>
<keyword id="KW-0238">DNA-binding</keyword>
<keyword id="KW-1185">Reference proteome</keyword>
<proteinExistence type="inferred from homology"/>
<evidence type="ECO:0000255" key="1">
    <source>
        <dbReference type="HAMAP-Rule" id="MF_00031"/>
    </source>
</evidence>
<accession>B5ZP79</accession>
<comment type="function">
    <text evidence="1">The RuvA-RuvB-RuvC complex processes Holliday junction (HJ) DNA during genetic recombination and DNA repair, while the RuvA-RuvB complex plays an important role in the rescue of blocked DNA replication forks via replication fork reversal (RFR). RuvA specifically binds to HJ cruciform DNA, conferring on it an open structure. The RuvB hexamer acts as an ATP-dependent pump, pulling dsDNA into and through the RuvAB complex. HJ branch migration allows RuvC to scan DNA until it finds its consensus sequence, where it cleaves and resolves the cruciform DNA.</text>
</comment>
<comment type="subunit">
    <text evidence="1">Homotetramer. Forms an RuvA(8)-RuvB(12)-Holliday junction (HJ) complex. HJ DNA is sandwiched between 2 RuvA tetramers; dsDNA enters through RuvA and exits via RuvB. An RuvB hexamer assembles on each DNA strand where it exits the tetramer. Each RuvB hexamer is contacted by two RuvA subunits (via domain III) on 2 adjacent RuvB subunits; this complex drives branch migration. In the full resolvosome a probable DNA-RuvA(4)-RuvB(12)-RuvC(2) complex forms which resolves the HJ.</text>
</comment>
<comment type="subcellular location">
    <subcellularLocation>
        <location evidence="1">Cytoplasm</location>
    </subcellularLocation>
</comment>
<comment type="domain">
    <text evidence="1">Has three domains with a flexible linker between the domains II and III and assumes an 'L' shape. Domain III is highly mobile and contacts RuvB.</text>
</comment>
<comment type="similarity">
    <text evidence="1">Belongs to the RuvA family.</text>
</comment>
<sequence>MIGKLKGTIDEIGEDYVLVDVHGVCYVAHCSARTLSKLGSADEACVLFIETYVREDQLKLFGFMTALEREWFNLLQSVQGVGAKVALAVLSTLTPGELANAIALQDRAAVSRAPGVGPKVAMRLVTELKNRAPAFAGEAINIALKQELGEGVAAAPVADAVSALTNLGYSRDQAANAVAAAMKTAGDDADSAKLIRLGLKELAR</sequence>